<proteinExistence type="inferred from homology"/>
<accession>Q1WVE0</accession>
<protein>
    <recommendedName>
        <fullName evidence="1">UPF0210 protein LSL_0162</fullName>
    </recommendedName>
</protein>
<comment type="subunit">
    <text evidence="1">Homodimer.</text>
</comment>
<comment type="similarity">
    <text evidence="1">Belongs to the UPF0210 family.</text>
</comment>
<gene>
    <name type="ordered locus">LSL_0162</name>
</gene>
<reference key="1">
    <citation type="journal article" date="2006" name="Proc. Natl. Acad. Sci. U.S.A.">
        <title>Multireplicon genome architecture of Lactobacillus salivarius.</title>
        <authorList>
            <person name="Claesson M.J."/>
            <person name="Li Y."/>
            <person name="Leahy S."/>
            <person name="Canchaya C."/>
            <person name="van Pijkeren J.P."/>
            <person name="Cerdeno-Tarraga A.M."/>
            <person name="Parkhill J."/>
            <person name="Flynn S."/>
            <person name="O'Sullivan G.C."/>
            <person name="Collins J.K."/>
            <person name="Higgins D."/>
            <person name="Shanahan F."/>
            <person name="Fitzgerald G.F."/>
            <person name="van Sinderen D."/>
            <person name="O'Toole P.W."/>
        </authorList>
    </citation>
    <scope>NUCLEOTIDE SEQUENCE [LARGE SCALE GENOMIC DNA]</scope>
    <source>
        <strain>UCC118</strain>
    </source>
</reference>
<dbReference type="EMBL" id="CP000233">
    <property type="protein sequence ID" value="ABD98977.1"/>
    <property type="molecule type" value="Genomic_DNA"/>
</dbReference>
<dbReference type="RefSeq" id="WP_011475560.1">
    <property type="nucleotide sequence ID" value="NC_007929.1"/>
</dbReference>
<dbReference type="RefSeq" id="YP_535060.1">
    <property type="nucleotide sequence ID" value="NC_007929.1"/>
</dbReference>
<dbReference type="SMR" id="Q1WVE0"/>
<dbReference type="STRING" id="362948.LSL_0162"/>
<dbReference type="KEGG" id="lsl:LSL_0162"/>
<dbReference type="PATRIC" id="fig|362948.14.peg.239"/>
<dbReference type="HOGENOM" id="CLU_048704_0_0_9"/>
<dbReference type="OrthoDB" id="9763001at2"/>
<dbReference type="Proteomes" id="UP000006559">
    <property type="component" value="Chromosome"/>
</dbReference>
<dbReference type="CDD" id="cd08025">
    <property type="entry name" value="RNR_PFL_like_DUF711"/>
    <property type="match status" value="1"/>
</dbReference>
<dbReference type="Gene3D" id="3.20.70.20">
    <property type="match status" value="1"/>
</dbReference>
<dbReference type="HAMAP" id="MF_01221">
    <property type="entry name" value="UPF0210"/>
    <property type="match status" value="1"/>
</dbReference>
<dbReference type="InterPro" id="IPR007841">
    <property type="entry name" value="UPF0210"/>
</dbReference>
<dbReference type="NCBIfam" id="NF003700">
    <property type="entry name" value="PRK05313.1"/>
    <property type="match status" value="1"/>
</dbReference>
<dbReference type="PANTHER" id="PTHR37560:SF1">
    <property type="entry name" value="UPF0210 PROTEIN MJ1665"/>
    <property type="match status" value="1"/>
</dbReference>
<dbReference type="PANTHER" id="PTHR37560">
    <property type="entry name" value="UPF0210 PROTEIN SPR0218"/>
    <property type="match status" value="1"/>
</dbReference>
<dbReference type="Pfam" id="PF05167">
    <property type="entry name" value="DUF711"/>
    <property type="match status" value="1"/>
</dbReference>
<dbReference type="SUPFAM" id="SSF51998">
    <property type="entry name" value="PFL-like glycyl radical enzymes"/>
    <property type="match status" value="1"/>
</dbReference>
<name>Y162_LIGS1</name>
<organism>
    <name type="scientific">Ligilactobacillus salivarius (strain UCC118)</name>
    <name type="common">Lactobacillus salivarius</name>
    <dbReference type="NCBI Taxonomy" id="362948"/>
    <lineage>
        <taxon>Bacteria</taxon>
        <taxon>Bacillati</taxon>
        <taxon>Bacillota</taxon>
        <taxon>Bacilli</taxon>
        <taxon>Lactobacillales</taxon>
        <taxon>Lactobacillaceae</taxon>
        <taxon>Ligilactobacillus</taxon>
    </lineage>
</organism>
<keyword id="KW-1185">Reference proteome</keyword>
<sequence>MDTAQILETIKMISEENLDIRTITMGISLLDCIDSDSDKACQKIYDKITTKAKDLVKVGNQIATEYGIPVINKRVSVTPISLIAAASKDKDYVKYAKALDKAAQTLGIDFIGGYSALVQKGYQNGDRTLIKSLPQALAETNLVCASVNVGSTRSGINMDAVKEMGQVVKSASELDFMTNAKMVIFCNAVEDNPFMAGGFHGVGEPDAVINVGVSGPGVVKSALEKVKGASMDVVAETIKQTAFKVTRMGQLVGSIAAEKLNVPFGIVDLSLAPTPAVGDSVAQILEEIGLEQVGTHGTTAALAMLNDAVKKGGIMACSHVGGLSGAFIPVSEDAGMIDAVNAGSLNIEKLEAMTVVCSVGLDMIAIPGDTPAETISAMIADEAAIGMINNKTTAVRVVPVPGKDVGETVEFGGLLGHAPIMAVNKVSSADMINRGGLIPAPVHSFKN</sequence>
<feature type="chain" id="PRO_1000066758" description="UPF0210 protein LSL_0162">
    <location>
        <begin position="1"/>
        <end position="447"/>
    </location>
</feature>
<evidence type="ECO:0000255" key="1">
    <source>
        <dbReference type="HAMAP-Rule" id="MF_01221"/>
    </source>
</evidence>